<protein>
    <recommendedName>
        <fullName evidence="1">Hydroxylamine reductase</fullName>
        <ecNumber evidence="1">1.7.99.1</ecNumber>
    </recommendedName>
    <alternativeName>
        <fullName evidence="1">Hybrid-cluster protein</fullName>
        <shortName evidence="1">HCP</shortName>
    </alternativeName>
    <alternativeName>
        <fullName evidence="1">Prismane protein</fullName>
    </alternativeName>
</protein>
<sequence>MFCIQCEQTIRTPAGNGCSYAQGMCGKLAATSDLQDLLIYMLQGVSVYATKARELGVINPEVDTFVPKAFFSTLTNVNFDDERIIAYAKQAAEYRESLKNAYEAACETAGKRAESLPPVAQFVLGTSKPEMLSQAPVALLNKDKNEIHEDILGLRLLCLYGLKGAAAYMEHARVLGKTDAEIAGRFHEIMAFLGEPSVDADKLFTTAMDIGQLNYRIMAMLDAGETEAFGHPEPTVVNTKPVKGKAILVSGHDMKDLELILEQTAGKGINVYTHGEMLPALAYPAFKKYAHLVGNYGSAWQNQQKEFANFPGAVVMTSNCIIDPNVGQYSDRIFTRSIVGWPGVTHVIGDDFSVVIDKALSLDGFQYDEIPHNITIGFARNALMAAAPTVVENVKNGSIKHFFLVGGCDGDKSERSYFTDLAKSAPKDSVILTLGCGKYKFNKLEFGDINGIPRLLDIGQCNDAYSAIQLAIALSQIFECDINELPLNLVLSWFEQKAIVVLLTLLSLGVKNIRTGPTPPAFLTANLAKILEEKFGLRNTTTVEADLKTMLNVA</sequence>
<feature type="chain" id="PRO_1000009170" description="Hydroxylamine reductase">
    <location>
        <begin position="1"/>
        <end position="554"/>
    </location>
</feature>
<feature type="binding site" evidence="1">
    <location>
        <position position="3"/>
    </location>
    <ligand>
        <name>[2Fe-2S] cluster</name>
        <dbReference type="ChEBI" id="CHEBI:190135"/>
    </ligand>
</feature>
<feature type="binding site" evidence="1">
    <location>
        <position position="6"/>
    </location>
    <ligand>
        <name>[2Fe-2S] cluster</name>
        <dbReference type="ChEBI" id="CHEBI:190135"/>
    </ligand>
</feature>
<feature type="binding site" evidence="1">
    <location>
        <position position="18"/>
    </location>
    <ligand>
        <name>[2Fe-2S] cluster</name>
        <dbReference type="ChEBI" id="CHEBI:190135"/>
    </ligand>
</feature>
<feature type="binding site" evidence="1">
    <location>
        <position position="25"/>
    </location>
    <ligand>
        <name>[2Fe-2S] cluster</name>
        <dbReference type="ChEBI" id="CHEBI:190135"/>
    </ligand>
</feature>
<feature type="binding site" evidence="1">
    <location>
        <position position="252"/>
    </location>
    <ligand>
        <name>hybrid [4Fe-2O-2S] cluster</name>
        <dbReference type="ChEBI" id="CHEBI:60519"/>
    </ligand>
</feature>
<feature type="binding site" evidence="1">
    <location>
        <position position="276"/>
    </location>
    <ligand>
        <name>hybrid [4Fe-2O-2S] cluster</name>
        <dbReference type="ChEBI" id="CHEBI:60519"/>
    </ligand>
</feature>
<feature type="binding site" evidence="1">
    <location>
        <position position="320"/>
    </location>
    <ligand>
        <name>hybrid [4Fe-2O-2S] cluster</name>
        <dbReference type="ChEBI" id="CHEBI:60519"/>
    </ligand>
</feature>
<feature type="binding site" description="via persulfide group" evidence="1">
    <location>
        <position position="408"/>
    </location>
    <ligand>
        <name>hybrid [4Fe-2O-2S] cluster</name>
        <dbReference type="ChEBI" id="CHEBI:60519"/>
    </ligand>
</feature>
<feature type="binding site" evidence="1">
    <location>
        <position position="436"/>
    </location>
    <ligand>
        <name>hybrid [4Fe-2O-2S] cluster</name>
        <dbReference type="ChEBI" id="CHEBI:60519"/>
    </ligand>
</feature>
<feature type="binding site" evidence="1">
    <location>
        <position position="461"/>
    </location>
    <ligand>
        <name>hybrid [4Fe-2O-2S] cluster</name>
        <dbReference type="ChEBI" id="CHEBI:60519"/>
    </ligand>
</feature>
<feature type="binding site" evidence="1">
    <location>
        <position position="495"/>
    </location>
    <ligand>
        <name>hybrid [4Fe-2O-2S] cluster</name>
        <dbReference type="ChEBI" id="CHEBI:60519"/>
    </ligand>
</feature>
<feature type="binding site" evidence="1">
    <location>
        <position position="497"/>
    </location>
    <ligand>
        <name>hybrid [4Fe-2O-2S] cluster</name>
        <dbReference type="ChEBI" id="CHEBI:60519"/>
    </ligand>
</feature>
<feature type="modified residue" description="Cysteine persulfide" evidence="1">
    <location>
        <position position="408"/>
    </location>
</feature>
<comment type="function">
    <text evidence="1">Catalyzes the reduction of hydroxylamine to form NH(3) and H(2)O.</text>
</comment>
<comment type="catalytic activity">
    <reaction evidence="1">
        <text>A + NH4(+) + H2O = hydroxylamine + AH2 + H(+)</text>
        <dbReference type="Rhea" id="RHEA:22052"/>
        <dbReference type="ChEBI" id="CHEBI:13193"/>
        <dbReference type="ChEBI" id="CHEBI:15377"/>
        <dbReference type="ChEBI" id="CHEBI:15378"/>
        <dbReference type="ChEBI" id="CHEBI:15429"/>
        <dbReference type="ChEBI" id="CHEBI:17499"/>
        <dbReference type="ChEBI" id="CHEBI:28938"/>
        <dbReference type="EC" id="1.7.99.1"/>
    </reaction>
</comment>
<comment type="cofactor">
    <cofactor evidence="1">
        <name>[2Fe-2S] cluster</name>
        <dbReference type="ChEBI" id="CHEBI:190135"/>
    </cofactor>
    <text evidence="1">Binds 1 [2Fe-2S] cluster.</text>
</comment>
<comment type="cofactor">
    <cofactor evidence="1">
        <name>hybrid [4Fe-2O-2S] cluster</name>
        <dbReference type="ChEBI" id="CHEBI:60519"/>
    </cofactor>
    <text evidence="1">Binds 1 hybrid [4Fe-2O-2S] cluster.</text>
</comment>
<comment type="subcellular location">
    <subcellularLocation>
        <location evidence="1">Cytoplasm</location>
    </subcellularLocation>
</comment>
<comment type="similarity">
    <text evidence="1">Belongs to the HCP family.</text>
</comment>
<dbReference type="EC" id="1.7.99.1" evidence="1"/>
<dbReference type="EMBL" id="CP000444">
    <property type="protein sequence ID" value="ABI43898.1"/>
    <property type="molecule type" value="Genomic_DNA"/>
</dbReference>
<dbReference type="SMR" id="Q0HSK7"/>
<dbReference type="KEGG" id="shm:Shewmr7_2914"/>
<dbReference type="HOGENOM" id="CLU_038344_2_0_6"/>
<dbReference type="GO" id="GO:0005737">
    <property type="term" value="C:cytoplasm"/>
    <property type="evidence" value="ECO:0007669"/>
    <property type="project" value="UniProtKB-SubCell"/>
</dbReference>
<dbReference type="GO" id="GO:0051537">
    <property type="term" value="F:2 iron, 2 sulfur cluster binding"/>
    <property type="evidence" value="ECO:0007669"/>
    <property type="project" value="UniProtKB-KW"/>
</dbReference>
<dbReference type="GO" id="GO:0050418">
    <property type="term" value="F:hydroxylamine reductase activity"/>
    <property type="evidence" value="ECO:0007669"/>
    <property type="project" value="UniProtKB-UniRule"/>
</dbReference>
<dbReference type="GO" id="GO:0046872">
    <property type="term" value="F:metal ion binding"/>
    <property type="evidence" value="ECO:0007669"/>
    <property type="project" value="UniProtKB-KW"/>
</dbReference>
<dbReference type="GO" id="GO:0004601">
    <property type="term" value="F:peroxidase activity"/>
    <property type="evidence" value="ECO:0007669"/>
    <property type="project" value="TreeGrafter"/>
</dbReference>
<dbReference type="GO" id="GO:0042542">
    <property type="term" value="P:response to hydrogen peroxide"/>
    <property type="evidence" value="ECO:0007669"/>
    <property type="project" value="TreeGrafter"/>
</dbReference>
<dbReference type="CDD" id="cd01914">
    <property type="entry name" value="HCP"/>
    <property type="match status" value="1"/>
</dbReference>
<dbReference type="FunFam" id="1.20.1270.20:FF:000001">
    <property type="entry name" value="Hydroxylamine reductase"/>
    <property type="match status" value="1"/>
</dbReference>
<dbReference type="FunFam" id="1.20.1270.20:FF:000002">
    <property type="entry name" value="Hydroxylamine reductase"/>
    <property type="match status" value="1"/>
</dbReference>
<dbReference type="FunFam" id="3.40.50.2030:FF:000001">
    <property type="entry name" value="Hydroxylamine reductase"/>
    <property type="match status" value="1"/>
</dbReference>
<dbReference type="FunFam" id="3.40.50.2030:FF:000002">
    <property type="entry name" value="Hydroxylamine reductase"/>
    <property type="match status" value="1"/>
</dbReference>
<dbReference type="Gene3D" id="1.20.1270.20">
    <property type="match status" value="2"/>
</dbReference>
<dbReference type="Gene3D" id="3.40.50.2030">
    <property type="match status" value="2"/>
</dbReference>
<dbReference type="HAMAP" id="MF_00069">
    <property type="entry name" value="Hydroxylam_reduct"/>
    <property type="match status" value="1"/>
</dbReference>
<dbReference type="InterPro" id="IPR004137">
    <property type="entry name" value="HCP/CODH"/>
</dbReference>
<dbReference type="InterPro" id="IPR010048">
    <property type="entry name" value="Hydroxylam_reduct"/>
</dbReference>
<dbReference type="InterPro" id="IPR016099">
    <property type="entry name" value="Prismane-like_a/b-sand"/>
</dbReference>
<dbReference type="InterPro" id="IPR011254">
    <property type="entry name" value="Prismane-like_sf"/>
</dbReference>
<dbReference type="InterPro" id="IPR016100">
    <property type="entry name" value="Prismane_a-bundle"/>
</dbReference>
<dbReference type="NCBIfam" id="TIGR01703">
    <property type="entry name" value="hybrid_clust"/>
    <property type="match status" value="1"/>
</dbReference>
<dbReference type="NCBIfam" id="NF003658">
    <property type="entry name" value="PRK05290.1"/>
    <property type="match status" value="1"/>
</dbReference>
<dbReference type="PANTHER" id="PTHR30109">
    <property type="entry name" value="HYDROXYLAMINE REDUCTASE"/>
    <property type="match status" value="1"/>
</dbReference>
<dbReference type="PANTHER" id="PTHR30109:SF0">
    <property type="entry name" value="HYDROXYLAMINE REDUCTASE"/>
    <property type="match status" value="1"/>
</dbReference>
<dbReference type="Pfam" id="PF03063">
    <property type="entry name" value="Prismane"/>
    <property type="match status" value="1"/>
</dbReference>
<dbReference type="PIRSF" id="PIRSF000076">
    <property type="entry name" value="HCP"/>
    <property type="match status" value="1"/>
</dbReference>
<dbReference type="SUPFAM" id="SSF56821">
    <property type="entry name" value="Prismane protein-like"/>
    <property type="match status" value="1"/>
</dbReference>
<name>HCP_SHESR</name>
<accession>Q0HSK7</accession>
<evidence type="ECO:0000255" key="1">
    <source>
        <dbReference type="HAMAP-Rule" id="MF_00069"/>
    </source>
</evidence>
<proteinExistence type="inferred from homology"/>
<keyword id="KW-0001">2Fe-2S</keyword>
<keyword id="KW-0963">Cytoplasm</keyword>
<keyword id="KW-0408">Iron</keyword>
<keyword id="KW-0411">Iron-sulfur</keyword>
<keyword id="KW-0479">Metal-binding</keyword>
<keyword id="KW-0560">Oxidoreductase</keyword>
<gene>
    <name evidence="1" type="primary">hcp</name>
    <name type="ordered locus">Shewmr7_2914</name>
</gene>
<reference key="1">
    <citation type="submission" date="2006-08" db="EMBL/GenBank/DDBJ databases">
        <title>Complete sequence of chromosome 1 of Shewanella sp. MR-7.</title>
        <authorList>
            <person name="Copeland A."/>
            <person name="Lucas S."/>
            <person name="Lapidus A."/>
            <person name="Barry K."/>
            <person name="Detter J.C."/>
            <person name="Glavina del Rio T."/>
            <person name="Hammon N."/>
            <person name="Israni S."/>
            <person name="Dalin E."/>
            <person name="Tice H."/>
            <person name="Pitluck S."/>
            <person name="Kiss H."/>
            <person name="Brettin T."/>
            <person name="Bruce D."/>
            <person name="Han C."/>
            <person name="Tapia R."/>
            <person name="Gilna P."/>
            <person name="Schmutz J."/>
            <person name="Larimer F."/>
            <person name="Land M."/>
            <person name="Hauser L."/>
            <person name="Kyrpides N."/>
            <person name="Mikhailova N."/>
            <person name="Nealson K."/>
            <person name="Konstantinidis K."/>
            <person name="Klappenbach J."/>
            <person name="Tiedje J."/>
            <person name="Richardson P."/>
        </authorList>
    </citation>
    <scope>NUCLEOTIDE SEQUENCE [LARGE SCALE GENOMIC DNA]</scope>
    <source>
        <strain>MR-7</strain>
    </source>
</reference>
<organism>
    <name type="scientific">Shewanella sp. (strain MR-7)</name>
    <dbReference type="NCBI Taxonomy" id="60481"/>
    <lineage>
        <taxon>Bacteria</taxon>
        <taxon>Pseudomonadati</taxon>
        <taxon>Pseudomonadota</taxon>
        <taxon>Gammaproteobacteria</taxon>
        <taxon>Alteromonadales</taxon>
        <taxon>Shewanellaceae</taxon>
        <taxon>Shewanella</taxon>
    </lineage>
</organism>